<gene>
    <name evidence="1" type="primary">rpsS</name>
    <name type="ordered locus">Desal_1189</name>
</gene>
<name>RS19_MARSD</name>
<accession>C6C189</accession>
<sequence length="93" mass="10595">MPRSLKKGPFIDDHLLKKVVKAQESGDRKVIQTWSRRSTIIPEMVGLTFAVHNGRKFIPVFVTENMVGHKLGEFSPTRTYYGHAADKKSKAKR</sequence>
<dbReference type="EMBL" id="CP001649">
    <property type="protein sequence ID" value="ACS79252.1"/>
    <property type="molecule type" value="Genomic_DNA"/>
</dbReference>
<dbReference type="RefSeq" id="WP_015851071.1">
    <property type="nucleotide sequence ID" value="NC_012881.1"/>
</dbReference>
<dbReference type="SMR" id="C6C189"/>
<dbReference type="STRING" id="526222.Desal_1189"/>
<dbReference type="KEGG" id="dsa:Desal_1189"/>
<dbReference type="eggNOG" id="COG0185">
    <property type="taxonomic scope" value="Bacteria"/>
</dbReference>
<dbReference type="HOGENOM" id="CLU_144911_0_1_7"/>
<dbReference type="OrthoDB" id="9797833at2"/>
<dbReference type="Proteomes" id="UP000002601">
    <property type="component" value="Chromosome"/>
</dbReference>
<dbReference type="GO" id="GO:0005737">
    <property type="term" value="C:cytoplasm"/>
    <property type="evidence" value="ECO:0007669"/>
    <property type="project" value="UniProtKB-ARBA"/>
</dbReference>
<dbReference type="GO" id="GO:0015935">
    <property type="term" value="C:small ribosomal subunit"/>
    <property type="evidence" value="ECO:0007669"/>
    <property type="project" value="InterPro"/>
</dbReference>
<dbReference type="GO" id="GO:0019843">
    <property type="term" value="F:rRNA binding"/>
    <property type="evidence" value="ECO:0007669"/>
    <property type="project" value="UniProtKB-UniRule"/>
</dbReference>
<dbReference type="GO" id="GO:0003735">
    <property type="term" value="F:structural constituent of ribosome"/>
    <property type="evidence" value="ECO:0007669"/>
    <property type="project" value="InterPro"/>
</dbReference>
<dbReference type="GO" id="GO:0000028">
    <property type="term" value="P:ribosomal small subunit assembly"/>
    <property type="evidence" value="ECO:0007669"/>
    <property type="project" value="TreeGrafter"/>
</dbReference>
<dbReference type="GO" id="GO:0006412">
    <property type="term" value="P:translation"/>
    <property type="evidence" value="ECO:0007669"/>
    <property type="project" value="UniProtKB-UniRule"/>
</dbReference>
<dbReference type="FunFam" id="3.30.860.10:FF:000001">
    <property type="entry name" value="30S ribosomal protein S19"/>
    <property type="match status" value="1"/>
</dbReference>
<dbReference type="Gene3D" id="3.30.860.10">
    <property type="entry name" value="30s Ribosomal Protein S19, Chain A"/>
    <property type="match status" value="1"/>
</dbReference>
<dbReference type="HAMAP" id="MF_00531">
    <property type="entry name" value="Ribosomal_uS19"/>
    <property type="match status" value="1"/>
</dbReference>
<dbReference type="InterPro" id="IPR002222">
    <property type="entry name" value="Ribosomal_uS19"/>
</dbReference>
<dbReference type="InterPro" id="IPR005732">
    <property type="entry name" value="Ribosomal_uS19_bac-type"/>
</dbReference>
<dbReference type="InterPro" id="IPR020934">
    <property type="entry name" value="Ribosomal_uS19_CS"/>
</dbReference>
<dbReference type="InterPro" id="IPR023575">
    <property type="entry name" value="Ribosomal_uS19_SF"/>
</dbReference>
<dbReference type="NCBIfam" id="TIGR01050">
    <property type="entry name" value="rpsS_bact"/>
    <property type="match status" value="1"/>
</dbReference>
<dbReference type="PANTHER" id="PTHR11880">
    <property type="entry name" value="RIBOSOMAL PROTEIN S19P FAMILY MEMBER"/>
    <property type="match status" value="1"/>
</dbReference>
<dbReference type="PANTHER" id="PTHR11880:SF8">
    <property type="entry name" value="SMALL RIBOSOMAL SUBUNIT PROTEIN US19M"/>
    <property type="match status" value="1"/>
</dbReference>
<dbReference type="Pfam" id="PF00203">
    <property type="entry name" value="Ribosomal_S19"/>
    <property type="match status" value="1"/>
</dbReference>
<dbReference type="PIRSF" id="PIRSF002144">
    <property type="entry name" value="Ribosomal_S19"/>
    <property type="match status" value="1"/>
</dbReference>
<dbReference type="PRINTS" id="PR00975">
    <property type="entry name" value="RIBOSOMALS19"/>
</dbReference>
<dbReference type="SUPFAM" id="SSF54570">
    <property type="entry name" value="Ribosomal protein S19"/>
    <property type="match status" value="1"/>
</dbReference>
<dbReference type="PROSITE" id="PS00323">
    <property type="entry name" value="RIBOSOMAL_S19"/>
    <property type="match status" value="1"/>
</dbReference>
<comment type="function">
    <text evidence="1">Protein S19 forms a complex with S13 that binds strongly to the 16S ribosomal RNA.</text>
</comment>
<comment type="similarity">
    <text evidence="1">Belongs to the universal ribosomal protein uS19 family.</text>
</comment>
<evidence type="ECO:0000255" key="1">
    <source>
        <dbReference type="HAMAP-Rule" id="MF_00531"/>
    </source>
</evidence>
<evidence type="ECO:0000305" key="2"/>
<proteinExistence type="inferred from homology"/>
<protein>
    <recommendedName>
        <fullName evidence="1">Small ribosomal subunit protein uS19</fullName>
    </recommendedName>
    <alternativeName>
        <fullName evidence="2">30S ribosomal protein S19</fullName>
    </alternativeName>
</protein>
<feature type="chain" id="PRO_1000211800" description="Small ribosomal subunit protein uS19">
    <location>
        <begin position="1"/>
        <end position="93"/>
    </location>
</feature>
<keyword id="KW-1185">Reference proteome</keyword>
<keyword id="KW-0687">Ribonucleoprotein</keyword>
<keyword id="KW-0689">Ribosomal protein</keyword>
<keyword id="KW-0694">RNA-binding</keyword>
<keyword id="KW-0699">rRNA-binding</keyword>
<reference key="1">
    <citation type="submission" date="2009-06" db="EMBL/GenBank/DDBJ databases">
        <title>Complete sequence of Desulfovibrio salexigens DSM 2638.</title>
        <authorList>
            <consortium name="US DOE Joint Genome Institute"/>
            <person name="Lucas S."/>
            <person name="Copeland A."/>
            <person name="Lapidus A."/>
            <person name="Glavina del Rio T."/>
            <person name="Tice H."/>
            <person name="Bruce D."/>
            <person name="Goodwin L."/>
            <person name="Pitluck S."/>
            <person name="Munk A.C."/>
            <person name="Brettin T."/>
            <person name="Detter J.C."/>
            <person name="Han C."/>
            <person name="Tapia R."/>
            <person name="Larimer F."/>
            <person name="Land M."/>
            <person name="Hauser L."/>
            <person name="Kyrpides N."/>
            <person name="Anderson I."/>
            <person name="Wall J.D."/>
            <person name="Arkin A.P."/>
            <person name="Dehal P."/>
            <person name="Chivian D."/>
            <person name="Giles B."/>
            <person name="Hazen T.C."/>
        </authorList>
    </citation>
    <scope>NUCLEOTIDE SEQUENCE [LARGE SCALE GENOMIC DNA]</scope>
    <source>
        <strain>ATCC 14822 / DSM 2638 / NCIMB 8403 / VKM B-1763</strain>
    </source>
</reference>
<organism>
    <name type="scientific">Maridesulfovibrio salexigens (strain ATCC 14822 / DSM 2638 / NCIMB 8403 / VKM B-1763)</name>
    <name type="common">Desulfovibrio salexigens</name>
    <dbReference type="NCBI Taxonomy" id="526222"/>
    <lineage>
        <taxon>Bacteria</taxon>
        <taxon>Pseudomonadati</taxon>
        <taxon>Thermodesulfobacteriota</taxon>
        <taxon>Desulfovibrionia</taxon>
        <taxon>Desulfovibrionales</taxon>
        <taxon>Desulfovibrionaceae</taxon>
        <taxon>Maridesulfovibrio</taxon>
    </lineage>
</organism>